<gene>
    <name type="ORF">C27B7.7</name>
</gene>
<dbReference type="EMBL" id="Z54236">
    <property type="protein sequence ID" value="CAA90982.2"/>
    <property type="molecule type" value="Genomic_DNA"/>
</dbReference>
<dbReference type="PIR" id="T19506">
    <property type="entry name" value="T19506"/>
</dbReference>
<dbReference type="RefSeq" id="NP_001255352.1">
    <property type="nucleotide sequence ID" value="NM_001268423.3"/>
</dbReference>
<dbReference type="SMR" id="Q18245"/>
<dbReference type="BioGRID" id="42816">
    <property type="interactions" value="2"/>
</dbReference>
<dbReference type="FunCoup" id="Q18245">
    <property type="interactions" value="1"/>
</dbReference>
<dbReference type="STRING" id="6239.C27B7.7a.1"/>
<dbReference type="PaxDb" id="6239-C27B7.7a"/>
<dbReference type="PeptideAtlas" id="Q18245"/>
<dbReference type="EnsemblMetazoa" id="C27B7.7a.1">
    <property type="protein sequence ID" value="C27B7.7a.1"/>
    <property type="gene ID" value="WBGene00007764"/>
</dbReference>
<dbReference type="GeneID" id="177708"/>
<dbReference type="KEGG" id="cel:CELE_C27B7.7"/>
<dbReference type="UCSC" id="C27B7.7">
    <property type="organism name" value="c. elegans"/>
</dbReference>
<dbReference type="AGR" id="WB:WBGene00007764"/>
<dbReference type="CTD" id="177708"/>
<dbReference type="WormBase" id="C27B7.7a">
    <property type="protein sequence ID" value="CE42680"/>
    <property type="gene ID" value="WBGene00007764"/>
</dbReference>
<dbReference type="eggNOG" id="KOG4221">
    <property type="taxonomic scope" value="Eukaryota"/>
</dbReference>
<dbReference type="GeneTree" id="ENSGT00940000176205"/>
<dbReference type="HOGENOM" id="CLU_246685_0_0_1"/>
<dbReference type="InParanoid" id="Q18245"/>
<dbReference type="OMA" id="QINVTWQ"/>
<dbReference type="OrthoDB" id="10253954at2759"/>
<dbReference type="PhylomeDB" id="Q18245"/>
<dbReference type="Reactome" id="R-CEL-114608">
    <property type="pathway name" value="Platelet degranulation"/>
</dbReference>
<dbReference type="PRO" id="PR:Q18245"/>
<dbReference type="Proteomes" id="UP000001940">
    <property type="component" value="Chromosome IV"/>
</dbReference>
<dbReference type="Bgee" id="WBGene00007764">
    <property type="expression patterns" value="Expressed in larva and 3 other cell types or tissues"/>
</dbReference>
<dbReference type="GO" id="GO:0005576">
    <property type="term" value="C:extracellular region"/>
    <property type="evidence" value="ECO:0007669"/>
    <property type="project" value="UniProtKB-SubCell"/>
</dbReference>
<dbReference type="CDD" id="cd00063">
    <property type="entry name" value="FN3"/>
    <property type="match status" value="6"/>
</dbReference>
<dbReference type="Gene3D" id="2.60.40.10">
    <property type="entry name" value="Immunoglobulins"/>
    <property type="match status" value="11"/>
</dbReference>
<dbReference type="InterPro" id="IPR003961">
    <property type="entry name" value="FN3_dom"/>
</dbReference>
<dbReference type="InterPro" id="IPR036116">
    <property type="entry name" value="FN3_sf"/>
</dbReference>
<dbReference type="InterPro" id="IPR007110">
    <property type="entry name" value="Ig-like_dom"/>
</dbReference>
<dbReference type="InterPro" id="IPR036179">
    <property type="entry name" value="Ig-like_dom_sf"/>
</dbReference>
<dbReference type="InterPro" id="IPR013783">
    <property type="entry name" value="Ig-like_fold"/>
</dbReference>
<dbReference type="InterPro" id="IPR050964">
    <property type="entry name" value="Striated_Muscle_Regulatory"/>
</dbReference>
<dbReference type="PANTHER" id="PTHR13817:SF175">
    <property type="entry name" value="IG-LIKE AND FIBRONECTIN TYPE-III DOMAIN-CONTAINING PROTEIN C27B7.7"/>
    <property type="match status" value="1"/>
</dbReference>
<dbReference type="PANTHER" id="PTHR13817">
    <property type="entry name" value="TITIN"/>
    <property type="match status" value="1"/>
</dbReference>
<dbReference type="Pfam" id="PF00041">
    <property type="entry name" value="fn3"/>
    <property type="match status" value="3"/>
</dbReference>
<dbReference type="SMART" id="SM00060">
    <property type="entry name" value="FN3"/>
    <property type="match status" value="8"/>
</dbReference>
<dbReference type="SUPFAM" id="SSF49265">
    <property type="entry name" value="Fibronectin type III"/>
    <property type="match status" value="5"/>
</dbReference>
<dbReference type="SUPFAM" id="SSF48726">
    <property type="entry name" value="Immunoglobulin"/>
    <property type="match status" value="2"/>
</dbReference>
<dbReference type="PROSITE" id="PS50853">
    <property type="entry name" value="FN3"/>
    <property type="match status" value="8"/>
</dbReference>
<dbReference type="PROSITE" id="PS50835">
    <property type="entry name" value="IG_LIKE"/>
    <property type="match status" value="2"/>
</dbReference>
<organism>
    <name type="scientific">Caenorhabditis elegans</name>
    <dbReference type="NCBI Taxonomy" id="6239"/>
    <lineage>
        <taxon>Eukaryota</taxon>
        <taxon>Metazoa</taxon>
        <taxon>Ecdysozoa</taxon>
        <taxon>Nematoda</taxon>
        <taxon>Chromadorea</taxon>
        <taxon>Rhabditida</taxon>
        <taxon>Rhabditina</taxon>
        <taxon>Rhabditomorpha</taxon>
        <taxon>Rhabditoidea</taxon>
        <taxon>Rhabditidae</taxon>
        <taxon>Peloderinae</taxon>
        <taxon>Caenorhabditis</taxon>
    </lineage>
</organism>
<feature type="signal peptide" evidence="1">
    <location>
        <begin position="1"/>
        <end position="16"/>
    </location>
</feature>
<feature type="chain" id="PRO_0000250557" description="Ig-like and fibronectin type-III domain-containing protein C27B7.7">
    <location>
        <begin position="17"/>
        <end position="1456"/>
    </location>
</feature>
<feature type="domain" description="Fibronectin type-III 1" evidence="3">
    <location>
        <begin position="24"/>
        <end position="128"/>
    </location>
</feature>
<feature type="domain" description="Fibronectin type-III 2" evidence="3">
    <location>
        <begin position="132"/>
        <end position="227"/>
    </location>
</feature>
<feature type="domain" description="Ig-like 1">
    <location>
        <begin position="236"/>
        <end position="322"/>
    </location>
</feature>
<feature type="domain" description="Fibronectin type-III 3" evidence="3">
    <location>
        <begin position="328"/>
        <end position="426"/>
    </location>
</feature>
<feature type="domain" description="Fibronectin type-III 4" evidence="3">
    <location>
        <begin position="531"/>
        <end position="631"/>
    </location>
</feature>
<feature type="domain" description="Fibronectin type-III 5" evidence="3">
    <location>
        <begin position="636"/>
        <end position="736"/>
    </location>
</feature>
<feature type="domain" description="Fibronectin type-III 6" evidence="3">
    <location>
        <begin position="737"/>
        <end position="846"/>
    </location>
</feature>
<feature type="domain" description="Ig-like 2">
    <location>
        <begin position="841"/>
        <end position="948"/>
    </location>
</feature>
<feature type="domain" description="Fibronectin type-III 7" evidence="3">
    <location>
        <begin position="955"/>
        <end position="1050"/>
    </location>
</feature>
<feature type="domain" description="Fibronectin type-III 8" evidence="3">
    <location>
        <begin position="1148"/>
        <end position="1234"/>
    </location>
</feature>
<feature type="domain" description="Fibronectin type-III 9" evidence="3">
    <location>
        <begin position="1236"/>
        <end position="1343"/>
    </location>
</feature>
<feature type="domain" description="Fibronectin type-III 10" evidence="3">
    <location>
        <begin position="1347"/>
        <end position="1438"/>
    </location>
</feature>
<feature type="region of interest" description="Disordered" evidence="4">
    <location>
        <begin position="1419"/>
        <end position="1456"/>
    </location>
</feature>
<feature type="compositionally biased region" description="Low complexity" evidence="4">
    <location>
        <begin position="1434"/>
        <end position="1445"/>
    </location>
</feature>
<feature type="glycosylation site" description="N-linked (GlcNAc...) asparagine" evidence="1">
    <location>
        <position position="64"/>
    </location>
</feature>
<feature type="glycosylation site" description="N-linked (GlcNAc...) asparagine" evidence="1">
    <location>
        <position position="146"/>
    </location>
</feature>
<feature type="glycosylation site" description="N-linked (GlcNAc...) asparagine" evidence="1">
    <location>
        <position position="164"/>
    </location>
</feature>
<feature type="glycosylation site" description="N-linked (GlcNAc...) asparagine" evidence="1">
    <location>
        <position position="198"/>
    </location>
</feature>
<feature type="glycosylation site" description="N-linked (GlcNAc...) asparagine" evidence="1">
    <location>
        <position position="225"/>
    </location>
</feature>
<feature type="glycosylation site" description="N-linked (GlcNAc...) asparagine" evidence="1">
    <location>
        <position position="471"/>
    </location>
</feature>
<feature type="glycosylation site" description="N-linked (GlcNAc...) asparagine" evidence="1">
    <location>
        <position position="497"/>
    </location>
</feature>
<feature type="glycosylation site" description="N-linked (GlcNAc...) asparagine" evidence="1">
    <location>
        <position position="517"/>
    </location>
</feature>
<feature type="glycosylation site" description="N-linked (GlcNAc...) asparagine" evidence="1">
    <location>
        <position position="658"/>
    </location>
</feature>
<feature type="glycosylation site" description="N-linked (GlcNAc...) asparagine" evidence="1">
    <location>
        <position position="691"/>
    </location>
</feature>
<feature type="glycosylation site" description="N-linked (GlcNAc...) asparagine" evidence="1">
    <location>
        <position position="692"/>
    </location>
</feature>
<feature type="glycosylation site" description="N-linked (GlcNAc...) asparagine" evidence="1">
    <location>
        <position position="893"/>
    </location>
</feature>
<feature type="glycosylation site" description="N-linked (GlcNAc...) asparagine" evidence="1">
    <location>
        <position position="898"/>
    </location>
</feature>
<feature type="glycosylation site" description="N-linked (GlcNAc...) asparagine" evidence="1">
    <location>
        <position position="969"/>
    </location>
</feature>
<feature type="glycosylation site" description="N-linked (GlcNAc...) asparagine" evidence="1">
    <location>
        <position position="1091"/>
    </location>
</feature>
<feature type="glycosylation site" description="N-linked (GlcNAc...) asparagine" evidence="1">
    <location>
        <position position="1120"/>
    </location>
</feature>
<feature type="glycosylation site" description="N-linked (GlcNAc...) asparagine" evidence="1">
    <location>
        <position position="1133"/>
    </location>
</feature>
<feature type="glycosylation site" description="N-linked (GlcNAc...) asparagine" evidence="1">
    <location>
        <position position="1151"/>
    </location>
</feature>
<feature type="glycosylation site" description="N-linked (GlcNAc...) asparagine" evidence="1">
    <location>
        <position position="1207"/>
    </location>
</feature>
<feature type="glycosylation site" description="N-linked (GlcNAc...) asparagine" evidence="1">
    <location>
        <position position="1268"/>
    </location>
</feature>
<feature type="glycosylation site" description="N-linked (GlcNAc...) asparagine" evidence="1">
    <location>
        <position position="1277"/>
    </location>
</feature>
<feature type="glycosylation site" description="N-linked (GlcNAc...) asparagine" evidence="1">
    <location>
        <position position="1298"/>
    </location>
</feature>
<feature type="glycosylation site" description="N-linked (GlcNAc...) asparagine" evidence="1">
    <location>
        <position position="1350"/>
    </location>
</feature>
<feature type="glycosylation site" description="N-linked (GlcNAc...) asparagine" evidence="1">
    <location>
        <position position="1357"/>
    </location>
</feature>
<feature type="glycosylation site" description="N-linked (GlcNAc...) asparagine" evidence="1">
    <location>
        <position position="1382"/>
    </location>
</feature>
<feature type="disulfide bond" evidence="2">
    <location>
        <begin position="254"/>
        <end position="308"/>
    </location>
</feature>
<feature type="disulfide bond" evidence="2">
    <location>
        <begin position="877"/>
        <end position="932"/>
    </location>
</feature>
<reference key="1">
    <citation type="journal article" date="1998" name="Science">
        <title>Genome sequence of the nematode C. elegans: a platform for investigating biology.</title>
        <authorList>
            <consortium name="The C. elegans sequencing consortium"/>
        </authorList>
    </citation>
    <scope>NUCLEOTIDE SEQUENCE [LARGE SCALE GENOMIC DNA]</scope>
    <source>
        <strain>Bristol N2</strain>
    </source>
</reference>
<reference key="2">
    <citation type="journal article" date="2003" name="Nat. Biotechnol.">
        <title>Lectin affinity capture, isotope-coded tagging and mass spectrometry to identify N-linked glycoproteins.</title>
        <authorList>
            <person name="Kaji H."/>
            <person name="Saito H."/>
            <person name="Yamauchi Y."/>
            <person name="Shinkawa T."/>
            <person name="Taoka M."/>
            <person name="Hirabayashi J."/>
            <person name="Kasai K."/>
            <person name="Takahashi N."/>
            <person name="Isobe T."/>
        </authorList>
    </citation>
    <scope>GLYCOSYLATION [LARGE SCALE ANALYSIS] AT ASN-1207</scope>
    <scope>IDENTIFICATION BY MASS SPECTROMETRY</scope>
    <source>
        <strain>Bristol N2</strain>
    </source>
</reference>
<reference key="3">
    <citation type="journal article" date="2007" name="Mol. Cell. Proteomics">
        <title>Proteomics reveals N-linked glycoprotein diversity in Caenorhabditis elegans and suggests an atypical translocation mechanism for integral membrane proteins.</title>
        <authorList>
            <person name="Kaji H."/>
            <person name="Kamiie J."/>
            <person name="Kawakami H."/>
            <person name="Kido K."/>
            <person name="Yamauchi Y."/>
            <person name="Shinkawa T."/>
            <person name="Taoka M."/>
            <person name="Takahashi N."/>
            <person name="Isobe T."/>
        </authorList>
    </citation>
    <scope>GLYCOSYLATION [LARGE SCALE ANALYSIS] AT ASN-497; ASN-691 AND ASN-1207</scope>
    <scope>IDENTIFICATION BY MASS SPECTROMETRY</scope>
    <source>
        <strain>Bristol N2</strain>
    </source>
</reference>
<protein>
    <recommendedName>
        <fullName>Ig-like and fibronectin type-III domain-containing protein C27B7.7</fullName>
    </recommendedName>
</protein>
<accession>Q18245</accession>
<name>YC27B_CAEEL</name>
<sequence length="1456" mass="163267">MISLSLVLLLLFGVRCFDSAGQINDDSPLFISTSIDNSMNLKILVEKKPYFTGSVTGYKLYYTNDSSQTNEEYEKWMHQEALSNQNSYNFVIDANKHEIVSGDVYRVRATVFFNNVESVPTGVISINTRQSIPKAPLIVNTKILYNSSVLISFVPADDVNAIENYTLMYKQMEAEEWKSLNFKSDFDGKVLLDGLIPNHTYEIKIFVTGGIVQGTPSNLATFTTNSTALALVKTEPDEEYTADPQTNEPLSITCTVKSVSKASVLWKVNGIKVSVDSSFYTVVTSVHEDFIESTIRAKSRTRSAKFTCLATNDAGDSSKEVNVIIKGPGSPPSEITLVAEKRGYTISWKPPSHPNGKITKYVVYHTLNREDPLSDWRKIDLDGSEKMVRIIMDTEESFYGRVQAATELGPGIISDIVAMERDTQPISVESDLFGVSATTMVVNPRETLSIQCTARGKPRPSISVAISDRKNASQVEVDVWSRLQATSSAGIVSAVHNFSVLTSKFVHCRAKNSAGSNYSTMELKVDKPGDAPTQIQVLSVNALDALVVWHSPQFPNSPITSYIVLVSNDDKEDKSTWLQYESNAKETQINRMLLPTGNLEKSTEYFVCVRAKNAAGIGPTSSLISFITLNGGPDSPPDNLKVLINEANQVIVYWNTPNSTTEVTGYLIYYTRDLSLSNDDYKNWQFVEMNNNSTRYKFDLSVGLKPKTFYRVRISGKNSHADGPASEVVEFETAYSEVPIPTDLKTEVLDDNTIHIKFNAVRDPDDHSKALGEYRIDLAATDDVLHALWKQIEPKSIKIDEISSMVDVEIDGDSVEKNQMYWVKVTARLDNPSWGMHSSKPRWFRTGHGKLMTSVTLEGAPLIEKEPNLFEELSVTCTGMGSPAPIITWEWMNKSIENGTEGWNILNIQIDDTTVVSKITRNNIRESGDLTCLANNNEGSSSASVEIRVLGPGNPPENIILTAYRNQINVTWQESTLPNGDIMKYIVYYSENENDDLSDWNKFETAELETYVETFGPHTKHFIRVQAVSDRGPGIISNVLSCISDVLYETIHLEIVASNILDFEAEPNQNVEIRCKGTGKPQPELFYQFANETEQNFVEVETNDMDLFEAKAPEINSRRNVTVTCRASNKYENVTISKVIIIKRPGEAPTNISWSFEEEYDSTLYINWNPIENANGEKLEYNLYLSNYKTKVSGPPVKIPDIPLDVNISLRVSAENEYGEGEKTFPIWIPTPNGGPKTAPILSSLHAQDSKVYIFWVEPRLPNGEIQNYTIYIQKENESENEEHSIDKEWKKFIYGSNITHVIIGVDDGLEENERYQMKMTATNQRHEGPETKVYTFDLISFDENDVIDNFTAIVINSTVFVEVGNPIYTKYNIYIREDGNNQTVKHEIDVESGKTTFEFPFQLDHTLSYTIKMSGMKLGRESPPSEEIDLEFISSPSPTPIISGSRRKVIKEPPL</sequence>
<proteinExistence type="evidence at protein level"/>
<keyword id="KW-1015">Disulfide bond</keyword>
<keyword id="KW-0325">Glycoprotein</keyword>
<keyword id="KW-0393">Immunoglobulin domain</keyword>
<keyword id="KW-1185">Reference proteome</keyword>
<keyword id="KW-0677">Repeat</keyword>
<keyword id="KW-0964">Secreted</keyword>
<keyword id="KW-0732">Signal</keyword>
<evidence type="ECO:0000255" key="1"/>
<evidence type="ECO:0000255" key="2">
    <source>
        <dbReference type="PROSITE-ProRule" id="PRU00114"/>
    </source>
</evidence>
<evidence type="ECO:0000255" key="3">
    <source>
        <dbReference type="PROSITE-ProRule" id="PRU00316"/>
    </source>
</evidence>
<evidence type="ECO:0000256" key="4">
    <source>
        <dbReference type="SAM" id="MobiDB-lite"/>
    </source>
</evidence>
<evidence type="ECO:0000305" key="5"/>
<comment type="subcellular location">
    <subcellularLocation>
        <location evidence="5">Secreted</location>
    </subcellularLocation>
</comment>